<proteinExistence type="evidence at protein level"/>
<accession>Q10570</accession>
<accession>Q96AF0</accession>
<name>CPSF1_HUMAN</name>
<organism>
    <name type="scientific">Homo sapiens</name>
    <name type="common">Human</name>
    <dbReference type="NCBI Taxonomy" id="9606"/>
    <lineage>
        <taxon>Eukaryota</taxon>
        <taxon>Metazoa</taxon>
        <taxon>Chordata</taxon>
        <taxon>Craniata</taxon>
        <taxon>Vertebrata</taxon>
        <taxon>Euteleostomi</taxon>
        <taxon>Mammalia</taxon>
        <taxon>Eutheria</taxon>
        <taxon>Euarchontoglires</taxon>
        <taxon>Primates</taxon>
        <taxon>Haplorrhini</taxon>
        <taxon>Catarrhini</taxon>
        <taxon>Hominidae</taxon>
        <taxon>Homo</taxon>
    </lineage>
</organism>
<comment type="function">
    <text evidence="1 6">Component of the cleavage and polyadenylation specificity factor (CPSF) complex that plays a key role in pre-mRNA 3'-end formation, recognizing the AAUAAA signal sequence and interacting with poly(A) polymerase and other factors to bring about cleavage and poly(A) addition. This subunit is involved in the RNA recognition step of the polyadenylation reaction (PubMed:14749727). May play a role in eye morphogenesis and the development of retinal ganglion cell projections to the midbrain (By similarity).</text>
</comment>
<comment type="subunit">
    <text evidence="5 6 7">Component of the cleavage and polyadenylation specificity factor (CPSF) complex, composed of CPSF1, CPSF2, CPSF3, CPSF4 and FIP1L1. Found in a complex with CPSF1, FIP1L1 and PAPOLA. Interacts with FIP1L1, TENT2/GLD2 and SRRM1. Interacts with TUT1; the interaction is direct and mediates the recruitment of the CPSF complex on the 3'UTR of selected pre-mRNAs.</text>
</comment>
<comment type="interaction">
    <interactant intactId="EBI-347859">
        <id>Q10570</id>
    </interactant>
    <interactant intactId="EBI-742054">
        <id>Q96D03</id>
        <label>DDIT4L</label>
    </interactant>
    <organismsDiffer>false</organismsDiffer>
    <experiments>3</experiments>
</comment>
<comment type="interaction">
    <interactant intactId="EBI-347859">
        <id>Q10570</id>
    </interactant>
    <interactant intactId="EBI-6509505">
        <id>Q0VD86</id>
        <label>INCA1</label>
    </interactant>
    <organismsDiffer>false</organismsDiffer>
    <experiments>3</experiments>
</comment>
<comment type="interaction">
    <interactant intactId="EBI-347859">
        <id>Q10570</id>
    </interactant>
    <interactant intactId="EBI-78579">
        <id>P06748</id>
        <label>NPM1</label>
    </interactant>
    <organismsDiffer>false</organismsDiffer>
    <experiments>2</experiments>
</comment>
<comment type="interaction">
    <interactant intactId="EBI-347859">
        <id>Q10570</id>
    </interactant>
    <interactant intactId="EBI-307352">
        <id>Q04864</id>
        <label>REL</label>
    </interactant>
    <organismsDiffer>false</organismsDiffer>
    <experiments>3</experiments>
</comment>
<comment type="subcellular location">
    <subcellularLocation>
        <location>Nucleus</location>
        <location>Nucleoplasm</location>
    </subcellularLocation>
</comment>
<comment type="tissue specificity">
    <text evidence="8">Widely expressed, with high expression in the retina.</text>
</comment>
<comment type="PTM">
    <text>The N-terminus is blocked.</text>
</comment>
<comment type="disease" evidence="8">
    <disease id="DI-05775">
        <name>Myopia 27, autosomal dominant</name>
        <acronym>MYP27</acronym>
        <description>A form of myopia, a refractive error of the eye, in which parallel rays from a distant object come to focus in front of the retina, vision being better for near objects than for far. MYP27 patients are affected by early-onset high myopia with increased axial lengths. Fundus changes include optic nerve head crescent and tigroid appearance of the posterior retina.</description>
        <dbReference type="MIM" id="618827"/>
    </disease>
    <text>The disease is caused by variants affecting the gene represented in this entry.</text>
</comment>
<comment type="similarity">
    <text evidence="9">Belongs to the CPSF1 family.</text>
</comment>
<feature type="chain" id="PRO_0000074387" description="Cleavage and polyadenylation specificity factor subunit 1">
    <location>
        <begin position="1"/>
        <end position="1443"/>
    </location>
</feature>
<feature type="region of interest" description="Disordered" evidence="4">
    <location>
        <begin position="404"/>
        <end position="435"/>
    </location>
</feature>
<feature type="region of interest" description="Disordered" evidence="4">
    <location>
        <begin position="546"/>
        <end position="570"/>
    </location>
</feature>
<feature type="region of interest" description="Disordered" evidence="4">
    <location>
        <begin position="715"/>
        <end position="777"/>
    </location>
</feature>
<feature type="region of interest" description="Disordered" evidence="4">
    <location>
        <begin position="901"/>
        <end position="921"/>
    </location>
</feature>
<feature type="short sequence motif" description="Nuclear localization signal" evidence="3">
    <location>
        <begin position="893"/>
        <end position="908"/>
    </location>
</feature>
<feature type="compositionally biased region" description="Basic and acidic residues" evidence="4">
    <location>
        <begin position="410"/>
        <end position="419"/>
    </location>
</feature>
<feature type="compositionally biased region" description="Basic and acidic residues" evidence="4">
    <location>
        <begin position="758"/>
        <end position="775"/>
    </location>
</feature>
<feature type="modified residue" description="Phosphoserine" evidence="2">
    <location>
        <position position="756"/>
    </location>
</feature>
<feature type="modified residue" description="Phosphoserine" evidence="10">
    <location>
        <position position="766"/>
    </location>
</feature>
<feature type="sequence variant" id="VAR_083935" description="In MYP27." evidence="8">
    <location>
        <begin position="5"/>
        <end position="1443"/>
    </location>
</feature>
<feature type="sequence variant" id="VAR_083936" description="In MYP27." evidence="8">
    <location>
        <begin position="620"/>
        <end position="1443"/>
    </location>
</feature>
<feature type="sequence variant" id="VAR_083937" description="In MYP27; uncertain significance." evidence="8">
    <original>D</original>
    <variation>Y</variation>
    <location>
        <position position="1275"/>
    </location>
</feature>
<feature type="sequence conflict" description="In Ref. 1; AAC50293." evidence="9" ref="1">
    <original>T</original>
    <variation>P</variation>
    <location>
        <position position="12"/>
    </location>
</feature>
<feature type="sequence conflict" description="In Ref. 1; AAC50293." evidence="9" ref="1">
    <location>
        <position position="1318"/>
    </location>
</feature>
<feature type="strand" evidence="11">
    <location>
        <begin position="2"/>
        <end position="9"/>
    </location>
</feature>
<feature type="strand" evidence="11">
    <location>
        <begin position="16"/>
        <end position="20"/>
    </location>
</feature>
<feature type="strand" evidence="11">
    <location>
        <begin position="25"/>
        <end position="27"/>
    </location>
</feature>
<feature type="strand" evidence="11">
    <location>
        <begin position="29"/>
        <end position="34"/>
    </location>
</feature>
<feature type="strand" evidence="11">
    <location>
        <begin position="37"/>
        <end position="44"/>
    </location>
</feature>
<feature type="strand" evidence="11">
    <location>
        <begin position="65"/>
        <end position="73"/>
    </location>
</feature>
<feature type="strand" evidence="11">
    <location>
        <begin position="80"/>
        <end position="85"/>
    </location>
</feature>
<feature type="strand" evidence="11">
    <location>
        <begin position="90"/>
        <end position="98"/>
    </location>
</feature>
<feature type="turn" evidence="11">
    <location>
        <begin position="99"/>
        <end position="101"/>
    </location>
</feature>
<feature type="strand" evidence="11">
    <location>
        <begin position="102"/>
        <end position="109"/>
    </location>
</feature>
<feature type="turn" evidence="11">
    <location>
        <begin position="110"/>
        <end position="113"/>
    </location>
</feature>
<feature type="strand" evidence="11">
    <location>
        <begin position="114"/>
        <end position="122"/>
    </location>
</feature>
<feature type="helix" evidence="11">
    <location>
        <begin position="126"/>
        <end position="128"/>
    </location>
</feature>
<feature type="turn" evidence="11">
    <location>
        <begin position="129"/>
        <end position="131"/>
    </location>
</feature>
<feature type="strand" evidence="11">
    <location>
        <begin position="140"/>
        <end position="143"/>
    </location>
</feature>
<feature type="strand" evidence="11">
    <location>
        <begin position="147"/>
        <end position="154"/>
    </location>
</feature>
<feature type="turn" evidence="11">
    <location>
        <begin position="155"/>
        <end position="157"/>
    </location>
</feature>
<feature type="strand" evidence="11">
    <location>
        <begin position="158"/>
        <end position="164"/>
    </location>
</feature>
<feature type="strand" evidence="11">
    <location>
        <begin position="189"/>
        <end position="193"/>
    </location>
</feature>
<feature type="strand" evidence="13">
    <location>
        <begin position="195"/>
        <end position="198"/>
    </location>
</feature>
<feature type="strand" evidence="11">
    <location>
        <begin position="202"/>
        <end position="208"/>
    </location>
</feature>
<feature type="strand" evidence="14">
    <location>
        <begin position="210"/>
        <end position="214"/>
    </location>
</feature>
<feature type="strand" evidence="11">
    <location>
        <begin position="216"/>
        <end position="221"/>
    </location>
</feature>
<feature type="helix" evidence="11">
    <location>
        <begin position="228"/>
        <end position="230"/>
    </location>
</feature>
<feature type="turn" evidence="11">
    <location>
        <begin position="231"/>
        <end position="233"/>
    </location>
</feature>
<feature type="strand" evidence="11">
    <location>
        <begin position="238"/>
        <end position="244"/>
    </location>
</feature>
<feature type="turn" evidence="11">
    <location>
        <begin position="247"/>
        <end position="250"/>
    </location>
</feature>
<feature type="strand" evidence="11">
    <location>
        <begin position="254"/>
        <end position="261"/>
    </location>
</feature>
<feature type="strand" evidence="11">
    <location>
        <begin position="265"/>
        <end position="270"/>
    </location>
</feature>
<feature type="turn" evidence="11">
    <location>
        <begin position="273"/>
        <end position="275"/>
    </location>
</feature>
<feature type="strand" evidence="11">
    <location>
        <begin position="278"/>
        <end position="282"/>
    </location>
</feature>
<feature type="strand" evidence="11">
    <location>
        <begin position="285"/>
        <end position="289"/>
    </location>
</feature>
<feature type="strand" evidence="11">
    <location>
        <begin position="291"/>
        <end position="293"/>
    </location>
</feature>
<feature type="strand" evidence="11">
    <location>
        <begin position="296"/>
        <end position="299"/>
    </location>
</feature>
<feature type="helix" evidence="11">
    <location>
        <begin position="302"/>
        <end position="304"/>
    </location>
</feature>
<feature type="turn" evidence="11">
    <location>
        <begin position="305"/>
        <end position="307"/>
    </location>
</feature>
<feature type="strand" evidence="11">
    <location>
        <begin position="326"/>
        <end position="338"/>
    </location>
</feature>
<feature type="strand" evidence="11">
    <location>
        <begin position="342"/>
        <end position="350"/>
    </location>
</feature>
<feature type="strand" evidence="11">
    <location>
        <begin position="359"/>
        <end position="361"/>
    </location>
</feature>
<feature type="strand" evidence="11">
    <location>
        <begin position="364"/>
        <end position="367"/>
    </location>
</feature>
<feature type="strand" evidence="11">
    <location>
        <begin position="372"/>
        <end position="376"/>
    </location>
</feature>
<feature type="strand" evidence="11">
    <location>
        <begin position="381"/>
        <end position="385"/>
    </location>
</feature>
<feature type="strand" evidence="11">
    <location>
        <begin position="387"/>
        <end position="389"/>
    </location>
</feature>
<feature type="strand" evidence="11">
    <location>
        <begin position="391"/>
        <end position="398"/>
    </location>
</feature>
<feature type="strand" evidence="11">
    <location>
        <begin position="461"/>
        <end position="469"/>
    </location>
</feature>
<feature type="strand" evidence="11">
    <location>
        <begin position="477"/>
        <end position="481"/>
    </location>
</feature>
<feature type="helix" evidence="11">
    <location>
        <begin position="488"/>
        <end position="490"/>
    </location>
</feature>
<feature type="strand" evidence="11">
    <location>
        <begin position="499"/>
        <end position="505"/>
    </location>
</feature>
<feature type="helix" evidence="11">
    <location>
        <begin position="507"/>
        <end position="509"/>
    </location>
</feature>
<feature type="strand" evidence="11">
    <location>
        <begin position="511"/>
        <end position="515"/>
    </location>
</feature>
<feature type="strand" evidence="11">
    <location>
        <begin position="522"/>
        <end position="528"/>
    </location>
</feature>
<feature type="strand" evidence="11">
    <location>
        <begin position="534"/>
        <end position="539"/>
    </location>
</feature>
<feature type="strand" evidence="11">
    <location>
        <begin position="572"/>
        <end position="579"/>
    </location>
</feature>
<feature type="strand" evidence="11">
    <location>
        <begin position="582"/>
        <end position="594"/>
    </location>
</feature>
<feature type="strand" evidence="11">
    <location>
        <begin position="596"/>
        <end position="600"/>
    </location>
</feature>
<feature type="strand" evidence="11">
    <location>
        <begin position="607"/>
        <end position="612"/>
    </location>
</feature>
<feature type="turn" evidence="11">
    <location>
        <begin position="613"/>
        <end position="616"/>
    </location>
</feature>
<feature type="strand" evidence="11">
    <location>
        <begin position="617"/>
        <end position="622"/>
    </location>
</feature>
<feature type="strand" evidence="11">
    <location>
        <begin position="625"/>
        <end position="630"/>
    </location>
</feature>
<feature type="strand" evidence="11">
    <location>
        <begin position="633"/>
        <end position="639"/>
    </location>
</feature>
<feature type="strand" evidence="11">
    <location>
        <begin position="642"/>
        <end position="644"/>
    </location>
</feature>
<feature type="strand" evidence="11">
    <location>
        <begin position="646"/>
        <end position="652"/>
    </location>
</feature>
<feature type="strand" evidence="11">
    <location>
        <begin position="655"/>
        <end position="662"/>
    </location>
</feature>
<feature type="strand" evidence="11">
    <location>
        <begin position="665"/>
        <end position="672"/>
    </location>
</feature>
<feature type="strand" evidence="11">
    <location>
        <begin position="680"/>
        <end position="684"/>
    </location>
</feature>
<feature type="strand" evidence="11">
    <location>
        <begin position="695"/>
        <end position="703"/>
    </location>
</feature>
<feature type="strand" evidence="11">
    <location>
        <begin position="782"/>
        <end position="789"/>
    </location>
</feature>
<feature type="strand" evidence="11">
    <location>
        <begin position="794"/>
        <end position="798"/>
    </location>
</feature>
<feature type="turn" evidence="11">
    <location>
        <begin position="799"/>
        <end position="802"/>
    </location>
</feature>
<feature type="strand" evidence="11">
    <location>
        <begin position="803"/>
        <end position="809"/>
    </location>
</feature>
<feature type="helix" evidence="14">
    <location>
        <begin position="811"/>
        <end position="813"/>
    </location>
</feature>
<feature type="strand" evidence="11">
    <location>
        <begin position="816"/>
        <end position="818"/>
    </location>
</feature>
<feature type="strand" evidence="11">
    <location>
        <begin position="846"/>
        <end position="855"/>
    </location>
</feature>
<feature type="strand" evidence="11">
    <location>
        <begin position="860"/>
        <end position="867"/>
    </location>
</feature>
<feature type="strand" evidence="11">
    <location>
        <begin position="870"/>
        <end position="878"/>
    </location>
</feature>
<feature type="strand" evidence="14">
    <location>
        <begin position="882"/>
        <end position="886"/>
    </location>
</feature>
<feature type="strand" evidence="11">
    <location>
        <begin position="890"/>
        <end position="894"/>
    </location>
</feature>
<feature type="strand" evidence="11">
    <location>
        <begin position="930"/>
        <end position="935"/>
    </location>
</feature>
<feature type="strand" evidence="11">
    <location>
        <begin position="937"/>
        <end position="939"/>
    </location>
</feature>
<feature type="strand" evidence="11">
    <location>
        <begin position="942"/>
        <end position="945"/>
    </location>
</feature>
<feature type="strand" evidence="11">
    <location>
        <begin position="947"/>
        <end position="949"/>
    </location>
</feature>
<feature type="strand" evidence="11">
    <location>
        <begin position="951"/>
        <end position="954"/>
    </location>
</feature>
<feature type="strand" evidence="11">
    <location>
        <begin position="962"/>
        <end position="965"/>
    </location>
</feature>
<feature type="strand" evidence="11">
    <location>
        <begin position="972"/>
        <end position="978"/>
    </location>
</feature>
<feature type="strand" evidence="11">
    <location>
        <begin position="981"/>
        <end position="983"/>
    </location>
</feature>
<feature type="strand" evidence="11">
    <location>
        <begin position="986"/>
        <end position="991"/>
    </location>
</feature>
<feature type="strand" evidence="11">
    <location>
        <begin position="994"/>
        <end position="1000"/>
    </location>
</feature>
<feature type="strand" evidence="11">
    <location>
        <begin position="1008"/>
        <end position="1011"/>
    </location>
</feature>
<feature type="strand" evidence="11">
    <location>
        <begin position="1013"/>
        <end position="1017"/>
    </location>
</feature>
<feature type="strand" evidence="11">
    <location>
        <begin position="1019"/>
        <end position="1028"/>
    </location>
</feature>
<feature type="turn" evidence="11">
    <location>
        <begin position="1029"/>
        <end position="1032"/>
    </location>
</feature>
<feature type="strand" evidence="11">
    <location>
        <begin position="1033"/>
        <end position="1043"/>
    </location>
</feature>
<feature type="strand" evidence="11">
    <location>
        <begin position="1046"/>
        <end position="1048"/>
    </location>
</feature>
<feature type="strand" evidence="14">
    <location>
        <begin position="1051"/>
        <end position="1054"/>
    </location>
</feature>
<feature type="strand" evidence="11">
    <location>
        <begin position="1057"/>
        <end position="1059"/>
    </location>
</feature>
<feature type="strand" evidence="11">
    <location>
        <begin position="1070"/>
        <end position="1080"/>
    </location>
</feature>
<feature type="turn" evidence="11">
    <location>
        <begin position="1081"/>
        <end position="1084"/>
    </location>
</feature>
<feature type="strand" evidence="12">
    <location>
        <begin position="1085"/>
        <end position="1093"/>
    </location>
</feature>
<feature type="strand" evidence="11">
    <location>
        <begin position="1098"/>
        <end position="1109"/>
    </location>
</feature>
<feature type="strand" evidence="11">
    <location>
        <begin position="1116"/>
        <end position="1127"/>
    </location>
</feature>
<feature type="strand" evidence="11">
    <location>
        <begin position="1131"/>
        <end position="1133"/>
    </location>
</feature>
<feature type="strand" evidence="11">
    <location>
        <begin position="1136"/>
        <end position="1146"/>
    </location>
</feature>
<feature type="helix" evidence="11">
    <location>
        <begin position="1155"/>
        <end position="1157"/>
    </location>
</feature>
<feature type="strand" evidence="11">
    <location>
        <begin position="1158"/>
        <end position="1170"/>
    </location>
</feature>
<feature type="strand" evidence="11">
    <location>
        <begin position="1172"/>
        <end position="1178"/>
    </location>
</feature>
<feature type="strand" evidence="11">
    <location>
        <begin position="1181"/>
        <end position="1186"/>
    </location>
</feature>
<feature type="strand" evidence="11">
    <location>
        <begin position="1189"/>
        <end position="1196"/>
    </location>
</feature>
<feature type="strand" evidence="11">
    <location>
        <begin position="1199"/>
        <end position="1207"/>
    </location>
</feature>
<feature type="strand" evidence="11">
    <location>
        <begin position="1212"/>
        <end position="1216"/>
    </location>
</feature>
<feature type="strand" evidence="11">
    <location>
        <begin position="1221"/>
        <end position="1229"/>
    </location>
</feature>
<feature type="strand" evidence="11">
    <location>
        <begin position="1231"/>
        <end position="1237"/>
    </location>
</feature>
<feature type="turn" evidence="11">
    <location>
        <begin position="1238"/>
        <end position="1241"/>
    </location>
</feature>
<feature type="strand" evidence="11">
    <location>
        <begin position="1242"/>
        <end position="1248"/>
    </location>
</feature>
<feature type="strand" evidence="11">
    <location>
        <begin position="1255"/>
        <end position="1262"/>
    </location>
</feature>
<feature type="strand" evidence="11">
    <location>
        <begin position="1268"/>
        <end position="1273"/>
    </location>
</feature>
<feature type="strand" evidence="11">
    <location>
        <begin position="1278"/>
        <end position="1282"/>
    </location>
</feature>
<feature type="helix" evidence="11">
    <location>
        <begin position="1285"/>
        <end position="1287"/>
    </location>
</feature>
<feature type="strand" evidence="11">
    <location>
        <begin position="1288"/>
        <end position="1293"/>
    </location>
</feature>
<feature type="strand" evidence="11">
    <location>
        <begin position="1297"/>
        <end position="1302"/>
    </location>
</feature>
<feature type="strand" evidence="11">
    <location>
        <begin position="1308"/>
        <end position="1315"/>
    </location>
</feature>
<feature type="strand" evidence="11">
    <location>
        <begin position="1334"/>
        <end position="1340"/>
    </location>
</feature>
<feature type="strand" evidence="11">
    <location>
        <begin position="1345"/>
        <end position="1351"/>
    </location>
</feature>
<feature type="helix" evidence="11">
    <location>
        <begin position="1353"/>
        <end position="1369"/>
    </location>
</feature>
<feature type="helix" evidence="11">
    <location>
        <begin position="1373"/>
        <end position="1375"/>
    </location>
</feature>
<feature type="helix" evidence="11">
    <location>
        <begin position="1378"/>
        <end position="1381"/>
    </location>
</feature>
<feature type="strand" evidence="12">
    <location>
        <begin position="1383"/>
        <end position="1385"/>
    </location>
</feature>
<feature type="strand" evidence="12">
    <location>
        <begin position="1398"/>
        <end position="1400"/>
    </location>
</feature>
<feature type="turn" evidence="11">
    <location>
        <begin position="1402"/>
        <end position="1404"/>
    </location>
</feature>
<feature type="helix" evidence="11">
    <location>
        <begin position="1405"/>
        <end position="1409"/>
    </location>
</feature>
<feature type="helix" evidence="11">
    <location>
        <begin position="1412"/>
        <end position="1422"/>
    </location>
</feature>
<feature type="helix" evidence="11">
    <location>
        <begin position="1426"/>
        <end position="1439"/>
    </location>
</feature>
<sequence length="1443" mass="160884">MYAVYKQAHPPTGLEFSMYCNFFNNSERNLVVAGTSQLYVYRLNRDAEALTKNDRSTEGKAHREKLELAASFSFFGNVMSMASVQLAGAKRDALLLSFKDAKLSVVEYDPGTHDLKTLSLHYFEEPELRDGFVQNVHTPRVRVDPDGRCAAMLVYGTRLVVLPFRRESLAEEHEGLVGEGQRSSFLPSYIIDVRALDEKLLNIIDLQFLHGYYEPTLLILFEPNQTWPGRVAVRQDTCSIVAISLNITQKVHPVIWSLTSLPFDCTQALAVPKPIGGVVVFAVNSLLYLNQSVPPYGVALNSLTTGTTAFPLRTQEGVRITLDCAQATFISYDKMVISLKGGEIYVLTLITDGMRSVRAFHFDKAAASVLTTSMVTMEPGYLFLGSRLGNSLLLKYTEKLQEPPASAVREAADKEEPPSKKKRVDATAGWSAAGKSVPQDEVDEIEVYGSEAQSGTQLATYSFEVCDSILNIGPCANAAVGEPAFLSEEFQNSPEPDLEIVVCSGHGKNGALSVLQKSIRPQVVTTFELPGCYDMWTVIAPVRKEEEDNPKGEGTEQEPSTTPEADDDGRRHGFLILSREDSTMILQTGQEIMELDTSGFATQGPTVFAGNIGDNRYIVQVSPLGIRLLEGVNQLHFIPVDLGAPIVQCAVADPYVVIMSAEGHVTMFLLKSDSYGGRHHRLALHKPPLHHQSKVITLCLYRDLSGMFTTESRLGGARDELGGRSGPEAEGLGSETSPTVDDEEEMLYGDSGSLFSPSKEEARRSSQPPADRDPAPFRAEPTHWCLLVRENGTMEIYQLPDWRLVFLVKNFPVGQRVLVDSSFGQPTTQGEARREEATRQGELPLVKEVLLVALGSRQSRPYLLVHVDQELLIYEAFPHDSQLGQGNLKVRFKKVPHNINFREKKPKPSKKKAEGGGAEEGAGARGRVARFRYFEDIYGYSGVFICGPSPHWLLVTGRGALRLHPMAIDGPVDSFAPFHNVNCPRGFLYFNRQGELRISVLPAYLSYDAPWPVRKIPLRCTAHYVAYHVESKVYAVATSTNTPCARIPRMTGEEKEFETIERDERYIHPQQEAFSIQLISPVSWEAIPNARIELQEWEHVTCMKTVSLRSEETVSGLKGYVAAGTCLMQGEEVTCRGRILIMDVIEVVPEPGQPLTKNKFKVLYEKEQKGPVTALCHCNGHLVSAIGQKIFLWSLRASELTGMAFIDTQLYIHQMISVKNFILAADVMKSISLLRYQEESKTLSLVSRDAKPLEVYSVDFMVDNAQLGFLVSDRDRNLMVYMYLPEAKESFGGMRLLRRADFHVGAHVNTFWRTPCRGATEGLSKKSVVWENKHITWFATLDGGIGLLLPMQEKTYRRLLMLQNALTTMLPHHAGLNPRAFRMLHVDRRTLQNAVRNVLDGELLNRYLYLSTMERSELAKKIGTTPDIILDDLLETDRVTAHF</sequence>
<keyword id="KW-0002">3D-structure</keyword>
<keyword id="KW-0225">Disease variant</keyword>
<keyword id="KW-0507">mRNA processing</keyword>
<keyword id="KW-0539">Nucleus</keyword>
<keyword id="KW-0597">Phosphoprotein</keyword>
<keyword id="KW-1267">Proteomics identification</keyword>
<keyword id="KW-1185">Reference proteome</keyword>
<keyword id="KW-0694">RNA-binding</keyword>
<reference key="1">
    <citation type="journal article" date="1995" name="Genes Dev.">
        <title>The 160-kD subunit of human cleavage-polyadenylation specificity factor coordinates pre-mRNA 3'-end formation.</title>
        <authorList>
            <person name="Murthy K.G."/>
            <person name="Manley J.L."/>
        </authorList>
    </citation>
    <scope>NUCLEOTIDE SEQUENCE [MRNA]</scope>
</reference>
<reference key="2">
    <citation type="journal article" date="2004" name="Genome Res.">
        <title>The status, quality, and expansion of the NIH full-length cDNA project: the Mammalian Gene Collection (MGC).</title>
        <authorList>
            <consortium name="The MGC Project Team"/>
        </authorList>
    </citation>
    <scope>NUCLEOTIDE SEQUENCE [LARGE SCALE MRNA]</scope>
    <source>
        <tissue>Pancreas</tissue>
    </source>
</reference>
<reference key="3">
    <citation type="journal article" date="2002" name="Mol. Cell. Biol.">
        <title>SRm160 splicing coactivator promotes transcript 3'-end cleavage.</title>
        <authorList>
            <person name="McCracken S."/>
            <person name="Lambermon M."/>
            <person name="Blencowe B.J."/>
        </authorList>
    </citation>
    <scope>INTERACTION WITH SRRM1</scope>
</reference>
<reference key="4">
    <citation type="journal article" date="2004" name="EMBO J.">
        <title>Human Fip1 is a subunit of CPSF that binds to U-rich RNA elements and stimulates poly(A) polymerase.</title>
        <authorList>
            <person name="Kaufmann I."/>
            <person name="Martin G."/>
            <person name="Friedlein A."/>
            <person name="Langen H."/>
            <person name="Keller W."/>
        </authorList>
    </citation>
    <scope>FUNCTION IN PRE-MRNA 3'-END PROCESSING</scope>
    <scope>IDENTIFICATION IN THE CPSF COMPLEX</scope>
    <scope>IDENTIFICATION IN A COMPLEX WITH FIP1L1 AND PAPOLA</scope>
    <scope>INTERACTION WITH FIP1L1</scope>
</reference>
<reference key="5">
    <citation type="journal article" date="2008" name="Proc. Natl. Acad. Sci. U.S.A.">
        <title>A quantitative atlas of mitotic phosphorylation.</title>
        <authorList>
            <person name="Dephoure N."/>
            <person name="Zhou C."/>
            <person name="Villen J."/>
            <person name="Beausoleil S.A."/>
            <person name="Bakalarski C.E."/>
            <person name="Elledge S.J."/>
            <person name="Gygi S.P."/>
        </authorList>
    </citation>
    <scope>IDENTIFICATION BY MASS SPECTROMETRY [LARGE SCALE ANALYSIS]</scope>
    <source>
        <tissue>Cervix carcinoma</tissue>
    </source>
</reference>
<reference key="6">
    <citation type="journal article" date="2009" name="Sci. Signal.">
        <title>Quantitative phosphoproteomic analysis of T cell receptor signaling reveals system-wide modulation of protein-protein interactions.</title>
        <authorList>
            <person name="Mayya V."/>
            <person name="Lundgren D.H."/>
            <person name="Hwang S.-I."/>
            <person name="Rezaul K."/>
            <person name="Wu L."/>
            <person name="Eng J.K."/>
            <person name="Rodionov V."/>
            <person name="Han D.K."/>
        </authorList>
    </citation>
    <scope>IDENTIFICATION BY MASS SPECTROMETRY [LARGE SCALE ANALYSIS]</scope>
    <source>
        <tissue>Leukemic T-cell</tissue>
    </source>
</reference>
<reference key="7">
    <citation type="journal article" date="2010" name="EMBO J.">
        <title>The poly A polymerase Star-PAP controls 3'-end cleavage by promoting CPSF interaction and specificity toward the pre-mRNA.</title>
        <authorList>
            <person name="Laishram R.S."/>
            <person name="Anderson R.A."/>
        </authorList>
    </citation>
    <scope>IDENTIFICATION IN THE CPSF COMPLEX</scope>
    <scope>INTERACTION WITH TUT1</scope>
</reference>
<reference key="8">
    <citation type="journal article" date="2011" name="BMC Syst. Biol.">
        <title>Initial characterization of the human central proteome.</title>
        <authorList>
            <person name="Burkard T.R."/>
            <person name="Planyavsky M."/>
            <person name="Kaupe I."/>
            <person name="Breitwieser F.P."/>
            <person name="Buerckstuemmer T."/>
            <person name="Bennett K.L."/>
            <person name="Superti-Furga G."/>
            <person name="Colinge J."/>
        </authorList>
    </citation>
    <scope>IDENTIFICATION BY MASS SPECTROMETRY [LARGE SCALE ANALYSIS]</scope>
</reference>
<reference key="9">
    <citation type="journal article" date="2013" name="J. Proteome Res.">
        <title>Toward a comprehensive characterization of a human cancer cell phosphoproteome.</title>
        <authorList>
            <person name="Zhou H."/>
            <person name="Di Palma S."/>
            <person name="Preisinger C."/>
            <person name="Peng M."/>
            <person name="Polat A.N."/>
            <person name="Heck A.J."/>
            <person name="Mohammed S."/>
        </authorList>
    </citation>
    <scope>PHOSPHORYLATION [LARGE SCALE ANALYSIS] AT SER-766</scope>
    <scope>IDENTIFICATION BY MASS SPECTROMETRY [LARGE SCALE ANALYSIS]</scope>
    <source>
        <tissue>Cervix carcinoma</tissue>
        <tissue>Erythroleukemia</tissue>
    </source>
</reference>
<reference key="10">
    <citation type="journal article" date="2015" name="Proteomics">
        <title>N-terminome analysis of the human mitochondrial proteome.</title>
        <authorList>
            <person name="Vaca Jacome A.S."/>
            <person name="Rabilloud T."/>
            <person name="Schaeffer-Reiss C."/>
            <person name="Rompais M."/>
            <person name="Ayoub D."/>
            <person name="Lane L."/>
            <person name="Bairoch A."/>
            <person name="Van Dorsselaer A."/>
            <person name="Carapito C."/>
        </authorList>
    </citation>
    <scope>IDENTIFICATION BY MASS SPECTROMETRY [LARGE SCALE ANALYSIS]</scope>
</reference>
<reference key="11">
    <citation type="journal article" date="2019" name="Hum. Mol. Genet.">
        <title>CPSF1 mutations are associated with early-onset high myopia and involved in retinal ganglion cell axon projection.</title>
        <authorList>
            <person name="Ouyang J."/>
            <person name="Sun W."/>
            <person name="Xiao X."/>
            <person name="Li S."/>
            <person name="Jia X."/>
            <person name="Zhou L."/>
            <person name="Wang P."/>
            <person name="Zhang Q."/>
        </authorList>
    </citation>
    <scope>VARIANTS MYP27 5-TYR--PHE-1443 DEL; 620-GLN--PHE-1443 DEL AND TYR-1275</scope>
    <scope>INVOLVEMENT IN MYP27</scope>
    <scope>TISSUE SPECIFICITY</scope>
</reference>
<protein>
    <recommendedName>
        <fullName>Cleavage and polyadenylation specificity factor subunit 1</fullName>
    </recommendedName>
    <alternativeName>
        <fullName>Cleavage and polyadenylation specificity factor 160 kDa subunit</fullName>
        <shortName>CPSF 160 kDa subunit</shortName>
    </alternativeName>
</protein>
<evidence type="ECO:0000250" key="1">
    <source>
        <dbReference type="UniProtKB" id="A0A0R4IC37"/>
    </source>
</evidence>
<evidence type="ECO:0000250" key="2">
    <source>
        <dbReference type="UniProtKB" id="Q9EPU4"/>
    </source>
</evidence>
<evidence type="ECO:0000255" key="3"/>
<evidence type="ECO:0000256" key="4">
    <source>
        <dbReference type="SAM" id="MobiDB-lite"/>
    </source>
</evidence>
<evidence type="ECO:0000269" key="5">
    <source>
    </source>
</evidence>
<evidence type="ECO:0000269" key="6">
    <source>
    </source>
</evidence>
<evidence type="ECO:0000269" key="7">
    <source>
    </source>
</evidence>
<evidence type="ECO:0000269" key="8">
    <source>
    </source>
</evidence>
<evidence type="ECO:0000305" key="9"/>
<evidence type="ECO:0007744" key="10">
    <source>
    </source>
</evidence>
<evidence type="ECO:0007829" key="11">
    <source>
        <dbReference type="PDB" id="6F9N"/>
    </source>
</evidence>
<evidence type="ECO:0007829" key="12">
    <source>
        <dbReference type="PDB" id="8E3I"/>
    </source>
</evidence>
<evidence type="ECO:0007829" key="13">
    <source>
        <dbReference type="PDB" id="8E3Q"/>
    </source>
</evidence>
<evidence type="ECO:0007829" key="14">
    <source>
        <dbReference type="PDB" id="8R8R"/>
    </source>
</evidence>
<gene>
    <name type="primary">CPSF1</name>
    <name type="synonym">CPSF160</name>
</gene>
<dbReference type="EMBL" id="U37012">
    <property type="protein sequence ID" value="AAC50293.1"/>
    <property type="molecule type" value="mRNA"/>
</dbReference>
<dbReference type="EMBL" id="BC017232">
    <property type="protein sequence ID" value="AAH17232.1"/>
    <property type="molecule type" value="mRNA"/>
</dbReference>
<dbReference type="CCDS" id="CCDS34966.1"/>
<dbReference type="RefSeq" id="NP_037423.2">
    <property type="nucleotide sequence ID" value="NM_013291.3"/>
</dbReference>
<dbReference type="PDB" id="6BLY">
    <property type="method" value="EM"/>
    <property type="resolution" value="3.36 A"/>
    <property type="chains" value="A=1-1443"/>
</dbReference>
<dbReference type="PDB" id="6BM0">
    <property type="method" value="EM"/>
    <property type="resolution" value="3.80 A"/>
    <property type="chains" value="A=1-1443"/>
</dbReference>
<dbReference type="PDB" id="6DNH">
    <property type="method" value="EM"/>
    <property type="resolution" value="3.40 A"/>
    <property type="chains" value="A=1-1443"/>
</dbReference>
<dbReference type="PDB" id="6F9N">
    <property type="method" value="X-ray"/>
    <property type="resolution" value="2.50 A"/>
    <property type="chains" value="A=1-1443"/>
</dbReference>
<dbReference type="PDB" id="6FUW">
    <property type="method" value="EM"/>
    <property type="resolution" value="3.07 A"/>
    <property type="chains" value="A=1-1443"/>
</dbReference>
<dbReference type="PDB" id="6URG">
    <property type="method" value="EM"/>
    <property type="resolution" value="3.00 A"/>
    <property type="chains" value="A=1-1443"/>
</dbReference>
<dbReference type="PDB" id="6URO">
    <property type="method" value="EM"/>
    <property type="resolution" value="3.60 A"/>
    <property type="chains" value="A=1-1443"/>
</dbReference>
<dbReference type="PDB" id="8E3I">
    <property type="method" value="EM"/>
    <property type="resolution" value="2.53 A"/>
    <property type="chains" value="A=1-1443"/>
</dbReference>
<dbReference type="PDB" id="8E3Q">
    <property type="method" value="EM"/>
    <property type="resolution" value="2.68 A"/>
    <property type="chains" value="A=1-1443"/>
</dbReference>
<dbReference type="PDB" id="8R8R">
    <property type="method" value="EM"/>
    <property type="resolution" value="2.79 A"/>
    <property type="chains" value="A=1-1443"/>
</dbReference>
<dbReference type="PDBsum" id="6BLY"/>
<dbReference type="PDBsum" id="6BM0"/>
<dbReference type="PDBsum" id="6DNH"/>
<dbReference type="PDBsum" id="6F9N"/>
<dbReference type="PDBsum" id="6FUW"/>
<dbReference type="PDBsum" id="6URG"/>
<dbReference type="PDBsum" id="6URO"/>
<dbReference type="PDBsum" id="8E3I"/>
<dbReference type="PDBsum" id="8E3Q"/>
<dbReference type="PDBsum" id="8R8R"/>
<dbReference type="EMDB" id="EMD-14185"/>
<dbReference type="EMDB" id="EMD-19008"/>
<dbReference type="EMDB" id="EMD-20860"/>
<dbReference type="EMDB" id="EMD-20861"/>
<dbReference type="EMDB" id="EMD-27866"/>
<dbReference type="EMDB" id="EMD-27870"/>
<dbReference type="EMDB" id="EMD-7113"/>
<dbReference type="EMDB" id="EMD-7114"/>
<dbReference type="SMR" id="Q10570"/>
<dbReference type="BioGRID" id="118946">
    <property type="interactions" value="266"/>
</dbReference>
<dbReference type="ComplexPortal" id="CPX-2698">
    <property type="entry name" value="pre-mRNA cleavage and polyadenylation specificity factor complex"/>
</dbReference>
<dbReference type="CORUM" id="Q10570"/>
<dbReference type="DIP" id="DIP-32694N"/>
<dbReference type="FunCoup" id="Q10570">
    <property type="interactions" value="3660"/>
</dbReference>
<dbReference type="IntAct" id="Q10570">
    <property type="interactions" value="73"/>
</dbReference>
<dbReference type="MINT" id="Q10570"/>
<dbReference type="STRING" id="9606.ENSP00000484669"/>
<dbReference type="GlyGen" id="Q10570">
    <property type="glycosylation" value="1 site, 1 O-linked glycan (1 site)"/>
</dbReference>
<dbReference type="iPTMnet" id="Q10570"/>
<dbReference type="PhosphoSitePlus" id="Q10570"/>
<dbReference type="SwissPalm" id="Q10570"/>
<dbReference type="BioMuta" id="CPSF1"/>
<dbReference type="DMDM" id="23503048"/>
<dbReference type="jPOST" id="Q10570"/>
<dbReference type="MassIVE" id="Q10570"/>
<dbReference type="PaxDb" id="9606-ENSP00000484669"/>
<dbReference type="PeptideAtlas" id="Q10570"/>
<dbReference type="ProteomicsDB" id="58860"/>
<dbReference type="Pumba" id="Q10570"/>
<dbReference type="Antibodypedia" id="14844">
    <property type="antibodies" value="81 antibodies from 22 providers"/>
</dbReference>
<dbReference type="DNASU" id="29894"/>
<dbReference type="Ensembl" id="ENST00000616140.2">
    <property type="protein sequence ID" value="ENSP00000484669.1"/>
    <property type="gene ID" value="ENSG00000071894.17"/>
</dbReference>
<dbReference type="Ensembl" id="ENST00000620219.4">
    <property type="protein sequence ID" value="ENSP00000478145.1"/>
    <property type="gene ID" value="ENSG00000071894.17"/>
</dbReference>
<dbReference type="Ensembl" id="ENST00000643746.1">
    <property type="protein sequence ID" value="ENSP00000495102.1"/>
    <property type="gene ID" value="ENSG00000285049.2"/>
</dbReference>
<dbReference type="Ensembl" id="ENST00000644539.2">
    <property type="protein sequence ID" value="ENSP00000495020.1"/>
    <property type="gene ID" value="ENSG00000285049.2"/>
</dbReference>
<dbReference type="GeneID" id="29894"/>
<dbReference type="KEGG" id="hsa:29894"/>
<dbReference type="MANE-Select" id="ENST00000616140.2">
    <property type="protein sequence ID" value="ENSP00000484669.1"/>
    <property type="RefSeq nucleotide sequence ID" value="NM_013291.3"/>
    <property type="RefSeq protein sequence ID" value="NP_037423.2"/>
</dbReference>
<dbReference type="UCSC" id="uc003zcj.3">
    <property type="organism name" value="human"/>
</dbReference>
<dbReference type="AGR" id="HGNC:2324"/>
<dbReference type="CTD" id="29894"/>
<dbReference type="DisGeNET" id="29894"/>
<dbReference type="GeneCards" id="CPSF1"/>
<dbReference type="HGNC" id="HGNC:2324">
    <property type="gene designation" value="CPSF1"/>
</dbReference>
<dbReference type="HPA" id="ENSG00000071894">
    <property type="expression patterns" value="Low tissue specificity"/>
</dbReference>
<dbReference type="MalaCards" id="CPSF1"/>
<dbReference type="MIM" id="606027">
    <property type="type" value="gene"/>
</dbReference>
<dbReference type="MIM" id="618827">
    <property type="type" value="phenotype"/>
</dbReference>
<dbReference type="neXtProt" id="NX_Q10570"/>
<dbReference type="PharmGKB" id="PA26841"/>
<dbReference type="VEuPathDB" id="HostDB:ENSG00000071894"/>
<dbReference type="eggNOG" id="KOG1896">
    <property type="taxonomic scope" value="Eukaryota"/>
</dbReference>
<dbReference type="GeneTree" id="ENSGT00950000183151"/>
<dbReference type="HOGENOM" id="CLU_002414_0_0_1"/>
<dbReference type="InParanoid" id="Q10570"/>
<dbReference type="OMA" id="PMTKFKL"/>
<dbReference type="OrthoDB" id="6109at2759"/>
<dbReference type="PAN-GO" id="Q10570">
    <property type="GO annotations" value="3 GO annotations based on evolutionary models"/>
</dbReference>
<dbReference type="PhylomeDB" id="Q10570"/>
<dbReference type="TreeFam" id="TF314322"/>
<dbReference type="PathwayCommons" id="Q10570"/>
<dbReference type="Reactome" id="R-HSA-159231">
    <property type="pathway name" value="Transport of Mature mRNA Derived from an Intronless Transcript"/>
</dbReference>
<dbReference type="Reactome" id="R-HSA-6784531">
    <property type="pathway name" value="tRNA processing in the nucleus"/>
</dbReference>
<dbReference type="Reactome" id="R-HSA-72187">
    <property type="pathway name" value="mRNA 3'-end processing"/>
</dbReference>
<dbReference type="Reactome" id="R-HSA-72203">
    <property type="pathway name" value="Processing of Capped Intron-Containing Pre-mRNA"/>
</dbReference>
<dbReference type="Reactome" id="R-HSA-73856">
    <property type="pathway name" value="RNA Polymerase II Transcription Termination"/>
</dbReference>
<dbReference type="Reactome" id="R-HSA-77595">
    <property type="pathway name" value="Processing of Intronless Pre-mRNAs"/>
</dbReference>
<dbReference type="SignaLink" id="Q10570"/>
<dbReference type="SIGNOR" id="Q10570"/>
<dbReference type="BioGRID-ORCS" id="29894">
    <property type="hits" value="671 hits in 1159 CRISPR screens"/>
</dbReference>
<dbReference type="CD-CODE" id="232F8A39">
    <property type="entry name" value="P-body"/>
</dbReference>
<dbReference type="CD-CODE" id="24B72B50">
    <property type="entry name" value="Histone Locus Body"/>
</dbReference>
<dbReference type="ChiTaRS" id="CPSF1">
    <property type="organism name" value="human"/>
</dbReference>
<dbReference type="GeneWiki" id="CPSF1"/>
<dbReference type="GenomeRNAi" id="29894"/>
<dbReference type="Pharos" id="Q10570">
    <property type="development level" value="Tbio"/>
</dbReference>
<dbReference type="PRO" id="PR:Q10570"/>
<dbReference type="Proteomes" id="UP000005640">
    <property type="component" value="Chromosome 8"/>
</dbReference>
<dbReference type="RNAct" id="Q10570">
    <property type="molecule type" value="protein"/>
</dbReference>
<dbReference type="Bgee" id="ENSG00000071894">
    <property type="expression patterns" value="Expressed in right testis and 95 other cell types or tissues"/>
</dbReference>
<dbReference type="ExpressionAtlas" id="Q10570">
    <property type="expression patterns" value="baseline and differential"/>
</dbReference>
<dbReference type="GO" id="GO:0005847">
    <property type="term" value="C:mRNA cleavage and polyadenylation specificity factor complex"/>
    <property type="evidence" value="ECO:0000314"/>
    <property type="project" value="UniProtKB"/>
</dbReference>
<dbReference type="GO" id="GO:0005654">
    <property type="term" value="C:nucleoplasm"/>
    <property type="evidence" value="ECO:0000314"/>
    <property type="project" value="HPA"/>
</dbReference>
<dbReference type="GO" id="GO:0005634">
    <property type="term" value="C:nucleus"/>
    <property type="evidence" value="ECO:0000318"/>
    <property type="project" value="GO_Central"/>
</dbReference>
<dbReference type="GO" id="GO:0019899">
    <property type="term" value="F:enzyme binding"/>
    <property type="evidence" value="ECO:0000353"/>
    <property type="project" value="UniProtKB"/>
</dbReference>
<dbReference type="GO" id="GO:0035925">
    <property type="term" value="F:mRNA 3'-UTR AU-rich region binding"/>
    <property type="evidence" value="ECO:0000314"/>
    <property type="project" value="UniProtKB"/>
</dbReference>
<dbReference type="GO" id="GO:0180012">
    <property type="term" value="P:co-transcriptional RNA 3'-end processing, cleavage and polyadenylation pathway"/>
    <property type="evidence" value="ECO:0000305"/>
    <property type="project" value="UniProtKB"/>
</dbReference>
<dbReference type="GO" id="GO:0006397">
    <property type="term" value="P:mRNA processing"/>
    <property type="evidence" value="ECO:0007669"/>
    <property type="project" value="UniProtKB-KW"/>
</dbReference>
<dbReference type="FunFam" id="1.10.150.910:FF:000005">
    <property type="entry name" value="Cleavage and polyadenylation specific factor 1"/>
    <property type="match status" value="1"/>
</dbReference>
<dbReference type="FunFam" id="2.130.10.10:FF:002223">
    <property type="entry name" value="Cleavage and polyadenylation specific factor 1"/>
    <property type="match status" value="1"/>
</dbReference>
<dbReference type="FunFam" id="2.130.10.10:FF:001659">
    <property type="entry name" value="Cleavage and polyadenylation specific factor 1, 160kDa (Predicted), isoform CRA_a"/>
    <property type="match status" value="1"/>
</dbReference>
<dbReference type="FunFam" id="2.130.10.10:FF:000118">
    <property type="entry name" value="Cleavage and polyadenylation specificity factor subunit 1"/>
    <property type="match status" value="1"/>
</dbReference>
<dbReference type="Gene3D" id="1.10.150.910">
    <property type="match status" value="1"/>
</dbReference>
<dbReference type="Gene3D" id="2.130.10.10">
    <property type="entry name" value="YVTN repeat-like/Quinoprotein amine dehydrogenase"/>
    <property type="match status" value="2"/>
</dbReference>
<dbReference type="InterPro" id="IPR018846">
    <property type="entry name" value="Beta-prop_RSE1/DDB1/CPSF1_1st"/>
</dbReference>
<dbReference type="InterPro" id="IPR004871">
    <property type="entry name" value="Cleavage/polyA-sp_fac_asu_C"/>
</dbReference>
<dbReference type="InterPro" id="IPR050358">
    <property type="entry name" value="RSE1/DDB1/CFT1/CPSF1"/>
</dbReference>
<dbReference type="InterPro" id="IPR015943">
    <property type="entry name" value="WD40/YVTN_repeat-like_dom_sf"/>
</dbReference>
<dbReference type="PANTHER" id="PTHR10644">
    <property type="entry name" value="DNA REPAIR/RNA PROCESSING CPSF FAMILY"/>
    <property type="match status" value="1"/>
</dbReference>
<dbReference type="Pfam" id="PF10433">
    <property type="entry name" value="Beta-prop_RSE1_1st"/>
    <property type="match status" value="1"/>
</dbReference>
<dbReference type="Pfam" id="PF23726">
    <property type="entry name" value="Beta-prop_RSE1_2nd"/>
    <property type="match status" value="1"/>
</dbReference>
<dbReference type="Pfam" id="PF03178">
    <property type="entry name" value="CPSF_A"/>
    <property type="match status" value="1"/>
</dbReference>